<comment type="function">
    <text evidence="3 7 8 9 10 11">Histone demethylase that specifically demethylates 'Lys-27' of histone H3, thereby playing a central role in histone code (PubMed:17713478, PubMed:17825402, PubMed:17851529, PubMed:18003914). Demethylates trimethylated and dimethylated H3 'Lys-27' (PubMed:17713478, PubMed:17825402, PubMed:17851529, PubMed:18003914). Plays a central role in regulation of posterior development, by regulating HOX gene expression (PubMed:17851529). Involved in inflammatory response by participating in macrophage differentiation in case of inflammation by regulating gene expression and macrophage differentiation (PubMed:17825402). Plays a demethylase-independent role in chromatin remodeling to regulate T-box family member-dependent gene expression by acting as a link between T-box factors and the SMARCA4-containing SWI/SNF remodeling complex (By similarity).</text>
</comment>
<comment type="catalytic activity">
    <reaction evidence="7 8 9 10">
        <text>N(6),N(6),N(6)-trimethyl-L-lysyl(27)-[histone H3] + 2 2-oxoglutarate + 2 O2 = N(6)-methyl-L-lysyl(27)-[histone H3] + 2 formaldehyde + 2 succinate + 2 CO2</text>
        <dbReference type="Rhea" id="RHEA:60224"/>
        <dbReference type="Rhea" id="RHEA-COMP:15535"/>
        <dbReference type="Rhea" id="RHEA-COMP:15544"/>
        <dbReference type="ChEBI" id="CHEBI:15379"/>
        <dbReference type="ChEBI" id="CHEBI:16526"/>
        <dbReference type="ChEBI" id="CHEBI:16810"/>
        <dbReference type="ChEBI" id="CHEBI:16842"/>
        <dbReference type="ChEBI" id="CHEBI:30031"/>
        <dbReference type="ChEBI" id="CHEBI:61929"/>
        <dbReference type="ChEBI" id="CHEBI:61961"/>
        <dbReference type="EC" id="1.14.11.68"/>
    </reaction>
</comment>
<comment type="cofactor">
    <cofactor evidence="1">
        <name>L-ascorbate</name>
        <dbReference type="ChEBI" id="CHEBI:38290"/>
    </cofactor>
</comment>
<comment type="cofactor">
    <cofactor evidence="8">
        <name>Fe(2+)</name>
        <dbReference type="ChEBI" id="CHEBI:29033"/>
    </cofactor>
</comment>
<comment type="subunit">
    <text evidence="3 8">Interacts with TLE1 (By similarity). Component of the MLL4 complex, at least composed of KMT2B/MLL4, ASH2L, RBBP5, WDR5, and KDM6B (PubMed:17825402). Interacts with TBX21, SMARCA4, SMARCC1 and SMARCC2 (By similarity).</text>
</comment>
<comment type="interaction">
    <interactant intactId="EBI-2831260">
        <id>O15054</id>
    </interactant>
    <interactant intactId="EBI-78473">
        <id>P03372</id>
        <label>ESR1</label>
    </interactant>
    <organismsDiffer>false</organismsDiffer>
    <experiments>2</experiments>
</comment>
<comment type="subcellular location">
    <subcellularLocation>
        <location evidence="15">Nucleus</location>
    </subcellularLocation>
</comment>
<comment type="alternative products">
    <event type="alternative splicing"/>
    <isoform>
        <id>O15054-2</id>
        <name>2</name>
        <sequence type="displayed"/>
    </isoform>
    <isoform>
        <id>O15054-1</id>
        <name>1</name>
        <sequence type="described" ref="VSP_040102"/>
    </isoform>
</comment>
<comment type="induction">
    <text evidence="6">By 12-O-tetradecanoylphorbol-13-acetate (TPA) in myeloid leukemia cells.</text>
</comment>
<comment type="disease" evidence="12">
    <disease id="DI-05608">
        <name>Stolerman neurodevelopmental syndrome</name>
        <acronym>NEDSST</acronym>
        <description>An autosomal dominant disorder characterized by global developmental delay, variable intellectual disability, poor language acquisition, and dysmorphic facial features including a prominent nasal bridge and coarse features. Some patients manifest autism spectrum disorder. Musculoskeletal features may be present and include widened and thickened hands and fingers, joint hypermobility, clinodactyly of the fifth fingers, and toe syndactyly.</description>
        <dbReference type="MIM" id="618505"/>
    </disease>
    <text>The disease is caused by variants affecting the gene represented in this entry.</text>
</comment>
<comment type="similarity">
    <text evidence="14">Belongs to the UTX family.</text>
</comment>
<comment type="sequence caution" evidence="14">
    <conflict type="erroneous initiation">
        <sequence resource="EMBL-CDS" id="BAA21572"/>
    </conflict>
    <text>Extended N-terminus.</text>
</comment>
<protein>
    <recommendedName>
        <fullName>Lysine-specific demethylase 6B</fullName>
        <ecNumber evidence="7 8 9 10">1.14.11.68</ecNumber>
    </recommendedName>
    <alternativeName>
        <fullName>JmjC domain-containing protein 3</fullName>
    </alternativeName>
    <alternativeName>
        <fullName>Jumonji domain-containing protein 3</fullName>
    </alternativeName>
    <alternativeName>
        <fullName>Lysine demethylase 6B</fullName>
    </alternativeName>
    <alternativeName>
        <fullName evidence="14">[histone H3]-trimethyl-L-lysine(27) demethylase 6B</fullName>
    </alternativeName>
</protein>
<accession>O15054</accession>
<accession>C9IZ40</accession>
<accession>Q96G33</accession>
<organism>
    <name type="scientific">Homo sapiens</name>
    <name type="common">Human</name>
    <dbReference type="NCBI Taxonomy" id="9606"/>
    <lineage>
        <taxon>Eukaryota</taxon>
        <taxon>Metazoa</taxon>
        <taxon>Chordata</taxon>
        <taxon>Craniata</taxon>
        <taxon>Vertebrata</taxon>
        <taxon>Euteleostomi</taxon>
        <taxon>Mammalia</taxon>
        <taxon>Eutheria</taxon>
        <taxon>Euarchontoglires</taxon>
        <taxon>Primates</taxon>
        <taxon>Haplorrhini</taxon>
        <taxon>Catarrhini</taxon>
        <taxon>Hominidae</taxon>
        <taxon>Homo</taxon>
    </lineage>
</organism>
<keyword id="KW-0002">3D-structure</keyword>
<keyword id="KW-0025">Alternative splicing</keyword>
<keyword id="KW-0156">Chromatin regulator</keyword>
<keyword id="KW-0223">Dioxygenase</keyword>
<keyword id="KW-0225">Disease variant</keyword>
<keyword id="KW-0395">Inflammatory response</keyword>
<keyword id="KW-0991">Intellectual disability</keyword>
<keyword id="KW-0408">Iron</keyword>
<keyword id="KW-1017">Isopeptide bond</keyword>
<keyword id="KW-0479">Metal-binding</keyword>
<keyword id="KW-0539">Nucleus</keyword>
<keyword id="KW-0560">Oxidoreductase</keyword>
<keyword id="KW-0597">Phosphoprotein</keyword>
<keyword id="KW-1267">Proteomics identification</keyword>
<keyword id="KW-1185">Reference proteome</keyword>
<keyword id="KW-0832">Ubl conjugation</keyword>
<keyword id="KW-0862">Zinc</keyword>
<name>KDM6B_HUMAN</name>
<sequence length="1643" mass="176632">MHRAVDPPGARAAREAFALGGLSCAGAWSSCPPHPPPRSAWLPGGRCSASIGQPPLPAPLPPSHGSSSGHPSKPYYAPGAPTPRPLHGKLESLHGCVQALLREPAQPGLWEQLGQLYESEHDSEEATRCYHSALRYGGSFAELGPRIGRLQQAQLWNFHTGSCQHRAKVLPPLEQVWNLLHLEHKRNYGAKRGGPPVKRAAEPPVVQPVPPAALSGPSGEEGLSPGGKRRRGCNSEQTGLPPGLPLPPPPLPPPPPPPPPPPPPLPGLATSPPFQLTKPGLWSTLHGDAWGPERKGSAPPERQEQRHSLPHPYPYPAPAYTAHPPGHRLVPAAPPGPGPRPPGAESHGCLPATRPPGSDLRESRVQRSRMDSSVSPAATTACVPYAPSRPPGLPGTTTSSSSSSSSNTGLRGVEPNPGIPGADHYQTPALEVSHHGRLGPSAHSSRKPFLGAPAATPHLSLPPGPSSPPPPPCPRLLRPPPPPAWLKGPACRAAREDGEILEELFFGTEGPPRPAPPPLPHREGFLGPPASRFSVGTQDSHTPPTPPTPTTSSSNSNSGSHSSSPAGPVSFPPPPYLARSIDPLPRPPSPAQNPQDPPLVPLTLALPPAPPSSCHQNTSGSFRRPESPRPRVSFPKTPEVGPGPPPGPLSKAPQPVPPGVGELPARGPRLFDFPPTPLEDQFEEPAEFKILPDGLANIMKMLDESIRKEEEQQQHEAGVAPQPPLKEPFASLQSPFPTDTAPTTTAPAVAVTTTTTTTTTTTATQEEEKKPPPALPPPPPLAKFPPPSQPQPPPPPPPSPASLLKSLASVLEGQKYCYRGTGAAVSTRPGPLPTTQYSPGPPSGATALPPTSAAPSAQGSPQPSASSSSQFSTSGGPWARERRAGEEPVPGPMTPTQPPPPLSLPPARSESEVLEEISRACETLVERVGRSATDPADPVDTAEPADSGTERLLPPAQAKEEAGGVAAVSGSCKRRQKEHQKEHRRHRRACKDSVGRRPREGRAKAKAKVPKEKSRRVLGNLDLQSEEIQGREKSRPDLGGASKAKPPTAPAPPSAPAPSAQPTPPSASVPGKKAREEAPGPPGVSRADMLKLRSLSEGPPKELKIRLIKVESGDKETFIASEVEERRLRMADLTISHCAADVVRASRNAKVKGKFRESYLSPAQSVKPKINTEEKLPREKLNPPTPSIYLESKRDAFSPVLLQFCTDPRNPITVIRGLAGSLRLNLGLFSTKTLVEASGEHTVEVRTQVQQPSDENWDLTGTRQIWPCESSRSHTTIAKYAQYQASSFQESLQEEKESEDEESEEPDSTTGTPPSSAPDPKNHHIIKFGTNIDLSDAKRWKPQLQELLKLPAFMRVTSTGNMLSHVGHTILGMNTVQLYMKVPGSRTPGHQENNNFCSVNINIGPGDCEWFAVHEHYWETISAFCDRHGVDYLTGSWWPILDDLYASNIPVYRFVQRPGDLVWINAGTVHWVQATGWCNNIAWNVGPLTAYQYQLALERYEWNEVKNVKSIVPMIHVSWNVARTVKISDPDLFKMIKFCLLQSMKHCQVQRESLVRAGKKIAYQGRVKDEPAYYCNECDVEVFNILFVTSENGSRNTYLVHCEGCARRRSAGLQGVVVLEQYRTEELAQAYDAFTLAPASTSR</sequence>
<proteinExistence type="evidence at protein level"/>
<gene>
    <name type="primary">KDM6B</name>
    <name type="synonym">JMJD3</name>
    <name type="synonym">KIAA0346</name>
</gene>
<reference key="1">
    <citation type="journal article" date="1997" name="DNA Res.">
        <title>Prediction of the coding sequences of unidentified human genes. VII. The complete sequences of 100 new cDNA clones from brain which can code for large proteins in vitro.</title>
        <authorList>
            <person name="Nagase T."/>
            <person name="Ishikawa K."/>
            <person name="Nakajima D."/>
            <person name="Ohira M."/>
            <person name="Seki N."/>
            <person name="Miyajima N."/>
            <person name="Tanaka A."/>
            <person name="Kotani H."/>
            <person name="Nomura N."/>
            <person name="Ohara O."/>
        </authorList>
    </citation>
    <scope>NUCLEOTIDE SEQUENCE [LARGE SCALE MRNA] (ISOFORM 1)</scope>
    <source>
        <tissue>Brain</tissue>
    </source>
</reference>
<reference key="2">
    <citation type="journal article" date="2002" name="DNA Res.">
        <title>Construction of expression-ready cDNA clones for KIAA genes: manual curation of 330 KIAA cDNA clones.</title>
        <authorList>
            <person name="Nakajima D."/>
            <person name="Okazaki N."/>
            <person name="Yamakawa H."/>
            <person name="Kikuno R."/>
            <person name="Ohara O."/>
            <person name="Nagase T."/>
        </authorList>
    </citation>
    <scope>SEQUENCE REVISION</scope>
</reference>
<reference key="3">
    <citation type="journal article" date="2006" name="Nature">
        <title>DNA sequence of human chromosome 17 and analysis of rearrangement in the human lineage.</title>
        <authorList>
            <person name="Zody M.C."/>
            <person name="Garber M."/>
            <person name="Adams D.J."/>
            <person name="Sharpe T."/>
            <person name="Harrow J."/>
            <person name="Lupski J.R."/>
            <person name="Nicholson C."/>
            <person name="Searle S.M."/>
            <person name="Wilming L."/>
            <person name="Young S.K."/>
            <person name="Abouelleil A."/>
            <person name="Allen N.R."/>
            <person name="Bi W."/>
            <person name="Bloom T."/>
            <person name="Borowsky M.L."/>
            <person name="Bugalter B.E."/>
            <person name="Butler J."/>
            <person name="Chang J.L."/>
            <person name="Chen C.-K."/>
            <person name="Cook A."/>
            <person name="Corum B."/>
            <person name="Cuomo C.A."/>
            <person name="de Jong P.J."/>
            <person name="DeCaprio D."/>
            <person name="Dewar K."/>
            <person name="FitzGerald M."/>
            <person name="Gilbert J."/>
            <person name="Gibson R."/>
            <person name="Gnerre S."/>
            <person name="Goldstein S."/>
            <person name="Grafham D.V."/>
            <person name="Grocock R."/>
            <person name="Hafez N."/>
            <person name="Hagopian D.S."/>
            <person name="Hart E."/>
            <person name="Norman C.H."/>
            <person name="Humphray S."/>
            <person name="Jaffe D.B."/>
            <person name="Jones M."/>
            <person name="Kamal M."/>
            <person name="Khodiyar V.K."/>
            <person name="LaButti K."/>
            <person name="Laird G."/>
            <person name="Lehoczky J."/>
            <person name="Liu X."/>
            <person name="Lokyitsang T."/>
            <person name="Loveland J."/>
            <person name="Lui A."/>
            <person name="Macdonald P."/>
            <person name="Major J.E."/>
            <person name="Matthews L."/>
            <person name="Mauceli E."/>
            <person name="McCarroll S.A."/>
            <person name="Mihalev A.H."/>
            <person name="Mudge J."/>
            <person name="Nguyen C."/>
            <person name="Nicol R."/>
            <person name="O'Leary S.B."/>
            <person name="Osoegawa K."/>
            <person name="Schwartz D.C."/>
            <person name="Shaw-Smith C."/>
            <person name="Stankiewicz P."/>
            <person name="Steward C."/>
            <person name="Swarbreck D."/>
            <person name="Venkataraman V."/>
            <person name="Whittaker C.A."/>
            <person name="Yang X."/>
            <person name="Zimmer A.R."/>
            <person name="Bradley A."/>
            <person name="Hubbard T."/>
            <person name="Birren B.W."/>
            <person name="Rogers J."/>
            <person name="Lander E.S."/>
            <person name="Nusbaum C."/>
        </authorList>
    </citation>
    <scope>NUCLEOTIDE SEQUENCE [LARGE SCALE GENOMIC DNA]</scope>
</reference>
<reference key="4">
    <citation type="journal article" date="2004" name="Genome Res.">
        <title>The status, quality, and expansion of the NIH full-length cDNA project: the Mammalian Gene Collection (MGC).</title>
        <authorList>
            <consortium name="The MGC Project Team"/>
        </authorList>
    </citation>
    <scope>NUCLEOTIDE SEQUENCE [LARGE SCALE MRNA] OF 1000-1643 (ISOFORM 2)</scope>
    <source>
        <tissue>Brain</tissue>
    </source>
</reference>
<reference key="5">
    <citation type="journal article" date="2006" name="Gene Expr.">
        <title>An efficient strategy to identify early TPA-responsive genes during differentiation of HL-60 cells.</title>
        <authorList>
            <person name="Hu L.Y."/>
            <person name="Tepper C.G."/>
            <person name="Lo S.H."/>
            <person name="Lin W.C."/>
        </authorList>
    </citation>
    <scope>INDUCTION BY TPA</scope>
</reference>
<reference key="6">
    <citation type="journal article" date="2007" name="Cell">
        <title>The histone H3 lysine-27 demethylase Jmjd3 links inflammation to inhibition of polycomb-mediated gene silencing.</title>
        <authorList>
            <person name="De Santa F."/>
            <person name="Totaro M.G."/>
            <person name="Prosperini E."/>
            <person name="Notarbartolo S."/>
            <person name="Testa G."/>
            <person name="Natoli G."/>
        </authorList>
    </citation>
    <scope>FUNCTION</scope>
    <scope>CATALYTIC ACTIVITY</scope>
    <scope>COFACTOR</scope>
    <scope>SUBCELLULAR LOCATION</scope>
    <scope>IDENTIFICATION IN THE MLL4 COMPLEX</scope>
</reference>
<reference key="7">
    <citation type="journal article" date="2007" name="Nature">
        <title>A histone H3 lysine 27 demethylase regulates animal posterior development.</title>
        <authorList>
            <person name="Lan F."/>
            <person name="Bayliss P.E."/>
            <person name="Rinn J.L."/>
            <person name="Whetstine J.R."/>
            <person name="Wang J.K."/>
            <person name="Chen S."/>
            <person name="Iwase S."/>
            <person name="Alpatov R."/>
            <person name="Issaeva I."/>
            <person name="Canaani E."/>
            <person name="Roberts T.M."/>
            <person name="Chang H.Y."/>
            <person name="Shi Y."/>
        </authorList>
    </citation>
    <scope>FUNCTION</scope>
    <scope>CATALYTIC ACTIVITY</scope>
</reference>
<reference key="8">
    <citation type="journal article" date="2007" name="Nature">
        <title>UTX and JMJD3 are histone H3K27 demethylases involved in HOX gene regulation and development.</title>
        <authorList>
            <person name="Agger K."/>
            <person name="Cloos P.A."/>
            <person name="Christensen J."/>
            <person name="Pasini D."/>
            <person name="Rose S."/>
            <person name="Rappsilber J."/>
            <person name="Issaeva I."/>
            <person name="Canaani E."/>
            <person name="Salcini A.E."/>
            <person name="Helin K."/>
        </authorList>
    </citation>
    <scope>FUNCTION</scope>
    <scope>CATALYTIC ACTIVITY</scope>
</reference>
<reference key="9">
    <citation type="journal article" date="2007" name="Proc. Natl. Acad. Sci. U.S.A.">
        <title>Identification of JmjC domain-containing UTX and JMJD3 as histone H3 lysine 27 demethylases.</title>
        <authorList>
            <person name="Hong S."/>
            <person name="Cho Y.W."/>
            <person name="Yu L.-R."/>
            <person name="Yu H."/>
            <person name="Veenstra T.D."/>
            <person name="Ge K."/>
        </authorList>
    </citation>
    <scope>FUNCTION</scope>
    <scope>CATALYTIC ACTIVITY</scope>
</reference>
<reference key="10">
    <citation type="journal article" date="2013" name="J. Proteome Res.">
        <title>Toward a comprehensive characterization of a human cancer cell phosphoproteome.</title>
        <authorList>
            <person name="Zhou H."/>
            <person name="Di Palma S."/>
            <person name="Preisinger C."/>
            <person name="Peng M."/>
            <person name="Polat A.N."/>
            <person name="Heck A.J."/>
            <person name="Mohammed S."/>
        </authorList>
    </citation>
    <scope>PHOSPHORYLATION [LARGE SCALE ANALYSIS] AT SER-224</scope>
    <scope>IDENTIFICATION BY MASS SPECTROMETRY [LARGE SCALE ANALYSIS]</scope>
    <source>
        <tissue>Erythroleukemia</tissue>
    </source>
</reference>
<reference key="11">
    <citation type="journal article" date="2017" name="Cell Chem. Biol.">
        <title>Potent and Selective KDM5 Inhibitor Stops Cellular Demethylation of H3K4me3 at Transcription Start Sites and Proliferation of MM1S Myeloma Cells.</title>
        <authorList>
            <person name="Tumber A."/>
            <person name="Nuzzi A."/>
            <person name="Hookway E.S."/>
            <person name="Hatch S.B."/>
            <person name="Velupillai S."/>
            <person name="Johansson C."/>
            <person name="Kawamura A."/>
            <person name="Savitsky P."/>
            <person name="Yapp C."/>
            <person name="Szykowska A."/>
            <person name="Wu N."/>
            <person name="Bountra C."/>
            <person name="Strain-Damerell C."/>
            <person name="Burgess-Brown N.A."/>
            <person name="Ruda G.F."/>
            <person name="Fedorov O."/>
            <person name="Munro S."/>
            <person name="England K.S."/>
            <person name="Nowak R.P."/>
            <person name="Schofield C.J."/>
            <person name="La Thangue N.B."/>
            <person name="Pawlyn C."/>
            <person name="Davies F."/>
            <person name="Morgan G."/>
            <person name="Athanasou N."/>
            <person name="Muller S."/>
            <person name="Oppermann U."/>
            <person name="Brennan P.E."/>
        </authorList>
    </citation>
    <scope>FUNCTION</scope>
    <scope>MUTAGENESIS OF 1390-HIS--GLU-1392</scope>
</reference>
<reference key="12">
    <citation type="journal article" date="2017" name="Nat. Struct. Mol. Biol.">
        <title>Site-specific mapping of the human SUMO proteome reveals co-modification with phosphorylation.</title>
        <authorList>
            <person name="Hendriks I.A."/>
            <person name="Lyon D."/>
            <person name="Young C."/>
            <person name="Jensen L.J."/>
            <person name="Vertegaal A.C."/>
            <person name="Nielsen M.L."/>
        </authorList>
    </citation>
    <scope>SUMOYLATION [LARGE SCALE ANALYSIS] AT LYS-1109</scope>
    <scope>IDENTIFICATION BY MASS SPECTROMETRY [LARGE SCALE ANALYSIS]</scope>
</reference>
<reference key="13">
    <citation type="submission" date="2010-12" db="PDB data bank">
        <title>Crystal structure of the human JMJD3 Jumonji domain.</title>
        <authorList>
            <consortium name="Structural genomics consortium (SGC)"/>
        </authorList>
    </citation>
    <scope>X-RAY CRYSTALLOGRAPHY (1.8 ANGSTROMS) OF 1176-1502 IN COMPLEX WITH NICKEL IONS AND 8-HYDROXYQUINOLINE-5-CARBOXYLIC ACID</scope>
</reference>
<reference key="14">
    <citation type="journal article" date="2019" name="Am. J. Med. Genet. A">
        <title>Genetic variants in the KDM6B gene are associated with neurodevelopmental delays and dysmorphic features.</title>
        <authorList>
            <person name="Stolerman E.S."/>
            <person name="Francisco E."/>
            <person name="Stallworth J.L."/>
            <person name="Jones J.R."/>
            <person name="Monaghan K.G."/>
            <person name="Keller-Ramey J."/>
            <person name="Person R."/>
            <person name="Wentzensen I.M."/>
            <person name="McWalter K."/>
            <person name="Keren B."/>
            <person name="Heron B."/>
            <person name="Nava C."/>
            <person name="Heron D."/>
            <person name="Kim K."/>
            <person name="Burton B."/>
            <person name="Al-Musafri F."/>
            <person name="O'Grady L."/>
            <person name="Sahai I."/>
            <person name="Escobar L.F."/>
            <person name="Meuwissen M."/>
            <person name="Reyniers E."/>
            <person name="Kooy F."/>
            <person name="Lacassie Y."/>
            <person name="Gunay-Aygun M."/>
            <person name="Schatz K.S."/>
            <person name="Hochstenbach R."/>
            <person name="Zwijnenburg P.J.G."/>
            <person name="Waisfisz Q."/>
            <person name="van Slegtenhorst M."/>
            <person name="Mancini G.M.S."/>
            <person name="Louie R.J."/>
        </authorList>
    </citation>
    <scope>INVOLVEMENT IN NEDSST</scope>
    <scope>VARIANTS NEDSST 75-TYR--ARG-1643 DEL; ARG-149 DEL; 1244-GLU--ARG-1643 DEL; SER-1331 AND SER-1379</scope>
</reference>
<dbReference type="EC" id="1.14.11.68" evidence="7 8 9 10"/>
<dbReference type="EMBL" id="AB002344">
    <property type="protein sequence ID" value="BAA21572.2"/>
    <property type="status" value="ALT_INIT"/>
    <property type="molecule type" value="mRNA"/>
</dbReference>
<dbReference type="EMBL" id="AC104581">
    <property type="status" value="NOT_ANNOTATED_CDS"/>
    <property type="molecule type" value="Genomic_DNA"/>
</dbReference>
<dbReference type="EMBL" id="BC009994">
    <property type="protein sequence ID" value="AAH09994.1"/>
    <property type="molecule type" value="mRNA"/>
</dbReference>
<dbReference type="CCDS" id="CCDS32552.1">
    <molecule id="O15054-1"/>
</dbReference>
<dbReference type="CCDS" id="CCDS86569.1">
    <molecule id="O15054-2"/>
</dbReference>
<dbReference type="RefSeq" id="NP_001073893.1">
    <molecule id="O15054-1"/>
    <property type="nucleotide sequence ID" value="NM_001080424.2"/>
</dbReference>
<dbReference type="RefSeq" id="NP_001335645.1">
    <molecule id="O15054-2"/>
    <property type="nucleotide sequence ID" value="NM_001348716.2"/>
</dbReference>
<dbReference type="RefSeq" id="XP_005256606.1">
    <property type="nucleotide sequence ID" value="XM_005256549.3"/>
</dbReference>
<dbReference type="RefSeq" id="XP_005256607.1">
    <property type="nucleotide sequence ID" value="XM_005256550.4"/>
</dbReference>
<dbReference type="RefSeq" id="XP_005256608.1">
    <property type="nucleotide sequence ID" value="XM_005256551.3"/>
</dbReference>
<dbReference type="RefSeq" id="XP_005256609.1">
    <property type="nucleotide sequence ID" value="XM_005256552.4"/>
</dbReference>
<dbReference type="RefSeq" id="XP_006721546.1">
    <property type="nucleotide sequence ID" value="XM_006721483.3"/>
</dbReference>
<dbReference type="RefSeq" id="XP_011522052.1">
    <property type="nucleotide sequence ID" value="XM_011523750.2"/>
</dbReference>
<dbReference type="RefSeq" id="XP_011522054.1">
    <property type="nucleotide sequence ID" value="XM_011523752.2"/>
</dbReference>
<dbReference type="PDB" id="2XUE">
    <property type="method" value="X-ray"/>
    <property type="resolution" value="2.00 A"/>
    <property type="chains" value="A/B=1141-1643"/>
</dbReference>
<dbReference type="PDB" id="2XXZ">
    <property type="method" value="X-ray"/>
    <property type="resolution" value="1.80 A"/>
    <property type="chains" value="A/B=1176-1505"/>
</dbReference>
<dbReference type="PDB" id="4ASK">
    <property type="method" value="X-ray"/>
    <property type="resolution" value="1.86 A"/>
    <property type="chains" value="A/B=1141-1643"/>
</dbReference>
<dbReference type="PDB" id="5FP3">
    <property type="method" value="X-ray"/>
    <property type="resolution" value="2.05 A"/>
    <property type="chains" value="A/B=1141-1643"/>
</dbReference>
<dbReference type="PDB" id="5OY3">
    <property type="method" value="X-ray"/>
    <property type="resolution" value="2.14 A"/>
    <property type="chains" value="A=1141-1643"/>
</dbReference>
<dbReference type="PDB" id="6F6D">
    <property type="method" value="X-ray"/>
    <property type="resolution" value="1.82 A"/>
    <property type="chains" value="A=1141-1643"/>
</dbReference>
<dbReference type="PDBsum" id="2XUE"/>
<dbReference type="PDBsum" id="2XXZ"/>
<dbReference type="PDBsum" id="4ASK"/>
<dbReference type="PDBsum" id="5FP3"/>
<dbReference type="PDBsum" id="5OY3"/>
<dbReference type="PDBsum" id="6F6D"/>
<dbReference type="SMR" id="O15054"/>
<dbReference type="BioGRID" id="116752">
    <property type="interactions" value="101"/>
</dbReference>
<dbReference type="CORUM" id="O15054"/>
<dbReference type="DIP" id="DIP-59912N"/>
<dbReference type="FunCoup" id="O15054">
    <property type="interactions" value="1531"/>
</dbReference>
<dbReference type="IntAct" id="O15054">
    <property type="interactions" value="15"/>
</dbReference>
<dbReference type="MINT" id="O15054"/>
<dbReference type="STRING" id="9606.ENSP00000254846"/>
<dbReference type="BindingDB" id="O15054"/>
<dbReference type="ChEMBL" id="CHEMBL1938211"/>
<dbReference type="GuidetoPHARMACOLOGY" id="2685"/>
<dbReference type="GlyCosmos" id="O15054">
    <property type="glycosylation" value="5 sites, 1 glycan"/>
</dbReference>
<dbReference type="GlyGen" id="O15054">
    <property type="glycosylation" value="11 sites, 1 O-linked glycan (5 sites)"/>
</dbReference>
<dbReference type="iPTMnet" id="O15054"/>
<dbReference type="PhosphoSitePlus" id="O15054"/>
<dbReference type="BioMuta" id="KDM6B"/>
<dbReference type="jPOST" id="O15054"/>
<dbReference type="MassIVE" id="O15054"/>
<dbReference type="PaxDb" id="9606-ENSP00000254846"/>
<dbReference type="PeptideAtlas" id="O15054"/>
<dbReference type="ProteomicsDB" id="48403">
    <molecule id="O15054-2"/>
</dbReference>
<dbReference type="ProteomicsDB" id="48404">
    <molecule id="O15054-1"/>
</dbReference>
<dbReference type="Pumba" id="O15054"/>
<dbReference type="ABCD" id="O15054">
    <property type="antibodies" value="1 sequenced antibody"/>
</dbReference>
<dbReference type="Antibodypedia" id="24405">
    <property type="antibodies" value="362 antibodies from 34 providers"/>
</dbReference>
<dbReference type="DNASU" id="23135"/>
<dbReference type="Ensembl" id="ENST00000254846.9">
    <molecule id="O15054-1"/>
    <property type="protein sequence ID" value="ENSP00000254846.5"/>
    <property type="gene ID" value="ENSG00000132510.11"/>
</dbReference>
<dbReference type="Ensembl" id="ENST00000448097.7">
    <molecule id="O15054-2"/>
    <property type="protein sequence ID" value="ENSP00000412513.2"/>
    <property type="gene ID" value="ENSG00000132510.11"/>
</dbReference>
<dbReference type="GeneID" id="23135"/>
<dbReference type="KEGG" id="hsa:23135"/>
<dbReference type="MANE-Select" id="ENST00000448097.7">
    <property type="protein sequence ID" value="ENSP00000412513.2"/>
    <property type="RefSeq nucleotide sequence ID" value="NM_001348716.2"/>
    <property type="RefSeq protein sequence ID" value="NP_001335645.1"/>
</dbReference>
<dbReference type="UCSC" id="uc002giw.2">
    <molecule id="O15054-2"/>
    <property type="organism name" value="human"/>
</dbReference>
<dbReference type="AGR" id="HGNC:29012"/>
<dbReference type="CTD" id="23135"/>
<dbReference type="DisGeNET" id="23135"/>
<dbReference type="GeneCards" id="KDM6B"/>
<dbReference type="HGNC" id="HGNC:29012">
    <property type="gene designation" value="KDM6B"/>
</dbReference>
<dbReference type="HPA" id="ENSG00000132510">
    <property type="expression patterns" value="Low tissue specificity"/>
</dbReference>
<dbReference type="MalaCards" id="KDM6B"/>
<dbReference type="MIM" id="611577">
    <property type="type" value="gene"/>
</dbReference>
<dbReference type="MIM" id="618505">
    <property type="type" value="phenotype"/>
</dbReference>
<dbReference type="neXtProt" id="NX_O15054"/>
<dbReference type="OpenTargets" id="ENSG00000132510"/>
<dbReference type="VEuPathDB" id="HostDB:ENSG00000132510"/>
<dbReference type="eggNOG" id="KOG1124">
    <property type="taxonomic scope" value="Eukaryota"/>
</dbReference>
<dbReference type="eggNOG" id="KOG1246">
    <property type="taxonomic scope" value="Eukaryota"/>
</dbReference>
<dbReference type="GeneTree" id="ENSGT00940000160414"/>
<dbReference type="HOGENOM" id="CLU_001909_0_0_1"/>
<dbReference type="InParanoid" id="O15054"/>
<dbReference type="OMA" id="LHGDVWG"/>
<dbReference type="OrthoDB" id="418911at2759"/>
<dbReference type="PAN-GO" id="O15054">
    <property type="GO annotations" value="7 GO annotations based on evolutionary models"/>
</dbReference>
<dbReference type="PhylomeDB" id="O15054"/>
<dbReference type="TreeFam" id="TF317405"/>
<dbReference type="BioCyc" id="MetaCyc:ENSG00000132510-MONOMER"/>
<dbReference type="BRENDA" id="1.14.11.68">
    <property type="organism ID" value="2681"/>
</dbReference>
<dbReference type="BRENDA" id="1.14.18.B1">
    <property type="organism ID" value="2681"/>
</dbReference>
<dbReference type="PathwayCommons" id="O15054"/>
<dbReference type="Reactome" id="R-HSA-2559580">
    <property type="pathway name" value="Oxidative Stress Induced Senescence"/>
</dbReference>
<dbReference type="Reactome" id="R-HSA-3214842">
    <property type="pathway name" value="HDMs demethylate histones"/>
</dbReference>
<dbReference type="Reactome" id="R-HSA-9821002">
    <property type="pathway name" value="Chromatin modifications during the maternal to zygotic transition (MZT)"/>
</dbReference>
<dbReference type="SignaLink" id="O15054"/>
<dbReference type="SIGNOR" id="O15054"/>
<dbReference type="BioGRID-ORCS" id="23135">
    <property type="hits" value="22 hits in 1176 CRISPR screens"/>
</dbReference>
<dbReference type="CD-CODE" id="7F36219C">
    <property type="entry name" value="Enhancer cluster"/>
</dbReference>
<dbReference type="ChiTaRS" id="KDM6B">
    <property type="organism name" value="human"/>
</dbReference>
<dbReference type="EvolutionaryTrace" id="O15054"/>
<dbReference type="GenomeRNAi" id="23135"/>
<dbReference type="Pharos" id="O15054">
    <property type="development level" value="Tchem"/>
</dbReference>
<dbReference type="PRO" id="PR:O15054"/>
<dbReference type="Proteomes" id="UP000005640">
    <property type="component" value="Chromosome 17"/>
</dbReference>
<dbReference type="RNAct" id="O15054">
    <property type="molecule type" value="protein"/>
</dbReference>
<dbReference type="Bgee" id="ENSG00000132510">
    <property type="expression patterns" value="Expressed in blood and 184 other cell types or tissues"/>
</dbReference>
<dbReference type="ExpressionAtlas" id="O15054">
    <property type="expression patterns" value="baseline and differential"/>
</dbReference>
<dbReference type="GO" id="GO:0044666">
    <property type="term" value="C:MLL3/4 complex"/>
    <property type="evidence" value="ECO:0000318"/>
    <property type="project" value="GO_Central"/>
</dbReference>
<dbReference type="GO" id="GO:0005654">
    <property type="term" value="C:nucleoplasm"/>
    <property type="evidence" value="ECO:0000304"/>
    <property type="project" value="Reactome"/>
</dbReference>
<dbReference type="GO" id="GO:0005634">
    <property type="term" value="C:nucleus"/>
    <property type="evidence" value="ECO:0000250"/>
    <property type="project" value="BHF-UCL"/>
</dbReference>
<dbReference type="GO" id="GO:0008013">
    <property type="term" value="F:beta-catenin binding"/>
    <property type="evidence" value="ECO:0007669"/>
    <property type="project" value="Ensembl"/>
</dbReference>
<dbReference type="GO" id="GO:0031490">
    <property type="term" value="F:chromatin DNA binding"/>
    <property type="evidence" value="ECO:0000318"/>
    <property type="project" value="GO_Central"/>
</dbReference>
<dbReference type="GO" id="GO:0032452">
    <property type="term" value="F:histone demethylase activity"/>
    <property type="evidence" value="ECO:0000304"/>
    <property type="project" value="Reactome"/>
</dbReference>
<dbReference type="GO" id="GO:0071558">
    <property type="term" value="F:histone H3K27me2/H3K27me3 demethylase activity"/>
    <property type="evidence" value="ECO:0000315"/>
    <property type="project" value="UniProtKB"/>
</dbReference>
<dbReference type="GO" id="GO:0046872">
    <property type="term" value="F:metal ion binding"/>
    <property type="evidence" value="ECO:0007669"/>
    <property type="project" value="UniProtKB-KW"/>
</dbReference>
<dbReference type="GO" id="GO:0000978">
    <property type="term" value="F:RNA polymerase II cis-regulatory region sequence-specific DNA binding"/>
    <property type="evidence" value="ECO:0000318"/>
    <property type="project" value="GO_Central"/>
</dbReference>
<dbReference type="GO" id="GO:0055007">
    <property type="term" value="P:cardiac muscle cell differentiation"/>
    <property type="evidence" value="ECO:0000250"/>
    <property type="project" value="BHF-UCL"/>
</dbReference>
<dbReference type="GO" id="GO:0045165">
    <property type="term" value="P:cell fate commitment"/>
    <property type="evidence" value="ECO:0007669"/>
    <property type="project" value="Ensembl"/>
</dbReference>
<dbReference type="GO" id="GO:0070301">
    <property type="term" value="P:cellular response to hydrogen peroxide"/>
    <property type="evidence" value="ECO:0007669"/>
    <property type="project" value="Ensembl"/>
</dbReference>
<dbReference type="GO" id="GO:0006338">
    <property type="term" value="P:chromatin remodeling"/>
    <property type="evidence" value="ECO:0000250"/>
    <property type="project" value="UniProtKB"/>
</dbReference>
<dbReference type="GO" id="GO:0045446">
    <property type="term" value="P:endothelial cell differentiation"/>
    <property type="evidence" value="ECO:0000250"/>
    <property type="project" value="BHF-UCL"/>
</dbReference>
<dbReference type="GO" id="GO:0007507">
    <property type="term" value="P:heart development"/>
    <property type="evidence" value="ECO:0000318"/>
    <property type="project" value="GO_Central"/>
</dbReference>
<dbReference type="GO" id="GO:0021766">
    <property type="term" value="P:hippocampus development"/>
    <property type="evidence" value="ECO:0007669"/>
    <property type="project" value="Ensembl"/>
</dbReference>
<dbReference type="GO" id="GO:0002437">
    <property type="term" value="P:inflammatory response to antigenic stimulus"/>
    <property type="evidence" value="ECO:0007669"/>
    <property type="project" value="Ensembl"/>
</dbReference>
<dbReference type="GO" id="GO:0048333">
    <property type="term" value="P:mesodermal cell differentiation"/>
    <property type="evidence" value="ECO:0000250"/>
    <property type="project" value="BHF-UCL"/>
</dbReference>
<dbReference type="GO" id="GO:0120162">
    <property type="term" value="P:positive regulation of cold-induced thermogenesis"/>
    <property type="evidence" value="ECO:0000250"/>
    <property type="project" value="YuBioLab"/>
</dbReference>
<dbReference type="GO" id="GO:0045944">
    <property type="term" value="P:positive regulation of transcription by RNA polymerase II"/>
    <property type="evidence" value="ECO:0000250"/>
    <property type="project" value="BHF-UCL"/>
</dbReference>
<dbReference type="GO" id="GO:0010468">
    <property type="term" value="P:regulation of gene expression"/>
    <property type="evidence" value="ECO:0000318"/>
    <property type="project" value="GO_Central"/>
</dbReference>
<dbReference type="GO" id="GO:0014823">
    <property type="term" value="P:response to activity"/>
    <property type="evidence" value="ECO:0007669"/>
    <property type="project" value="Ensembl"/>
</dbReference>
<dbReference type="GO" id="GO:0060992">
    <property type="term" value="P:response to fungicide"/>
    <property type="evidence" value="ECO:0007669"/>
    <property type="project" value="Ensembl"/>
</dbReference>
<dbReference type="FunFam" id="1.20.58.1370:FF:000001">
    <property type="entry name" value="lysine-specific demethylase 6A isoform X2"/>
    <property type="match status" value="1"/>
</dbReference>
<dbReference type="FunFam" id="2.10.110.20:FF:000001">
    <property type="entry name" value="lysine-specific demethylase 6A isoform X2"/>
    <property type="match status" value="1"/>
</dbReference>
<dbReference type="FunFam" id="2.60.120.650:FF:000009">
    <property type="entry name" value="Putative lysine-specific demethylase 6B"/>
    <property type="match status" value="1"/>
</dbReference>
<dbReference type="Gene3D" id="1.20.58.1370">
    <property type="match status" value="1"/>
</dbReference>
<dbReference type="Gene3D" id="2.10.110.20">
    <property type="match status" value="1"/>
</dbReference>
<dbReference type="Gene3D" id="2.60.120.650">
    <property type="entry name" value="Cupin"/>
    <property type="match status" value="1"/>
</dbReference>
<dbReference type="InterPro" id="IPR051630">
    <property type="entry name" value="Corepressor-Demethylase"/>
</dbReference>
<dbReference type="InterPro" id="IPR003347">
    <property type="entry name" value="JmjC_dom"/>
</dbReference>
<dbReference type="InterPro" id="IPR046941">
    <property type="entry name" value="KDM6_GATAL_sf"/>
</dbReference>
<dbReference type="InterPro" id="IPR048562">
    <property type="entry name" value="KDM6A_B-like_C-hel"/>
</dbReference>
<dbReference type="InterPro" id="IPR048560">
    <property type="entry name" value="KDM6A_B-like_GATAL"/>
</dbReference>
<dbReference type="PANTHER" id="PTHR14017">
    <property type="entry name" value="LYSINE-SPECIFIC DEMETHYLASE"/>
    <property type="match status" value="1"/>
</dbReference>
<dbReference type="PANTHER" id="PTHR14017:SF5">
    <property type="entry name" value="LYSINE-SPECIFIC DEMETHYLASE 6B"/>
    <property type="match status" value="1"/>
</dbReference>
<dbReference type="Pfam" id="PF02373">
    <property type="entry name" value="JmjC"/>
    <property type="match status" value="1"/>
</dbReference>
<dbReference type="Pfam" id="PF21322">
    <property type="entry name" value="KDM6_C-hel"/>
    <property type="match status" value="1"/>
</dbReference>
<dbReference type="Pfam" id="PF21326">
    <property type="entry name" value="KDM6_GATAL"/>
    <property type="match status" value="1"/>
</dbReference>
<dbReference type="SMART" id="SM00558">
    <property type="entry name" value="JmjC"/>
    <property type="match status" value="1"/>
</dbReference>
<dbReference type="SUPFAM" id="SSF51197">
    <property type="entry name" value="Clavaminate synthase-like"/>
    <property type="match status" value="1"/>
</dbReference>
<dbReference type="PROSITE" id="PS51184">
    <property type="entry name" value="JMJC"/>
    <property type="match status" value="1"/>
</dbReference>
<feature type="chain" id="PRO_0000292007" description="Lysine-specific demethylase 6B">
    <location>
        <begin position="1"/>
        <end position="1643"/>
    </location>
</feature>
<feature type="domain" description="JmjC" evidence="4">
    <location>
        <begin position="1339"/>
        <end position="1502"/>
    </location>
</feature>
<feature type="region of interest" description="Disordered" evidence="5">
    <location>
        <begin position="52"/>
        <end position="88"/>
    </location>
</feature>
<feature type="region of interest" description="Disordered" evidence="5">
    <location>
        <begin position="190"/>
        <end position="680"/>
    </location>
</feature>
<feature type="region of interest" description="Disordered" evidence="5">
    <location>
        <begin position="704"/>
        <end position="807"/>
    </location>
</feature>
<feature type="region of interest" description="Disordered" evidence="5">
    <location>
        <begin position="822"/>
        <end position="1096"/>
    </location>
</feature>
<feature type="region of interest" description="Disordered" evidence="5">
    <location>
        <begin position="1288"/>
        <end position="1325"/>
    </location>
</feature>
<feature type="compositionally biased region" description="Low complexity" evidence="5">
    <location>
        <begin position="63"/>
        <end position="74"/>
    </location>
</feature>
<feature type="compositionally biased region" description="Low complexity" evidence="5">
    <location>
        <begin position="212"/>
        <end position="223"/>
    </location>
</feature>
<feature type="compositionally biased region" description="Pro residues" evidence="5">
    <location>
        <begin position="242"/>
        <end position="266"/>
    </location>
</feature>
<feature type="compositionally biased region" description="Basic and acidic residues" evidence="5">
    <location>
        <begin position="291"/>
        <end position="307"/>
    </location>
</feature>
<feature type="compositionally biased region" description="Pro residues" evidence="5">
    <location>
        <begin position="332"/>
        <end position="342"/>
    </location>
</feature>
<feature type="compositionally biased region" description="Basic and acidic residues" evidence="5">
    <location>
        <begin position="359"/>
        <end position="370"/>
    </location>
</feature>
<feature type="compositionally biased region" description="Low complexity" evidence="5">
    <location>
        <begin position="394"/>
        <end position="412"/>
    </location>
</feature>
<feature type="compositionally biased region" description="Pro residues" evidence="5">
    <location>
        <begin position="460"/>
        <end position="484"/>
    </location>
</feature>
<feature type="compositionally biased region" description="Low complexity" evidence="5">
    <location>
        <begin position="550"/>
        <end position="569"/>
    </location>
</feature>
<feature type="compositionally biased region" description="Pro residues" evidence="5">
    <location>
        <begin position="584"/>
        <end position="600"/>
    </location>
</feature>
<feature type="compositionally biased region" description="Pro residues" evidence="5">
    <location>
        <begin position="641"/>
        <end position="658"/>
    </location>
</feature>
<feature type="compositionally biased region" description="Basic and acidic residues" evidence="5">
    <location>
        <begin position="704"/>
        <end position="714"/>
    </location>
</feature>
<feature type="compositionally biased region" description="Low complexity" evidence="5">
    <location>
        <begin position="740"/>
        <end position="764"/>
    </location>
</feature>
<feature type="compositionally biased region" description="Pro residues" evidence="5">
    <location>
        <begin position="772"/>
        <end position="800"/>
    </location>
</feature>
<feature type="compositionally biased region" description="Low complexity" evidence="5">
    <location>
        <begin position="843"/>
        <end position="877"/>
    </location>
</feature>
<feature type="compositionally biased region" description="Pro residues" evidence="5">
    <location>
        <begin position="889"/>
        <end position="904"/>
    </location>
</feature>
<feature type="compositionally biased region" description="Basic and acidic residues" evidence="5">
    <location>
        <begin position="916"/>
        <end position="929"/>
    </location>
</feature>
<feature type="compositionally biased region" description="Basic residues" evidence="5">
    <location>
        <begin position="972"/>
        <end position="989"/>
    </location>
</feature>
<feature type="compositionally biased region" description="Basic and acidic residues" evidence="5">
    <location>
        <begin position="990"/>
        <end position="1003"/>
    </location>
</feature>
<feature type="compositionally biased region" description="Basic residues" evidence="5">
    <location>
        <begin position="1004"/>
        <end position="1016"/>
    </location>
</feature>
<feature type="compositionally biased region" description="Pro residues" evidence="5">
    <location>
        <begin position="1047"/>
        <end position="1067"/>
    </location>
</feature>
<feature type="compositionally biased region" description="Acidic residues" evidence="5">
    <location>
        <begin position="1296"/>
        <end position="1307"/>
    </location>
</feature>
<feature type="binding site" evidence="14">
    <location>
        <position position="1390"/>
    </location>
    <ligand>
        <name>Fe cation</name>
        <dbReference type="ChEBI" id="CHEBI:24875"/>
    </ligand>
</feature>
<feature type="binding site" evidence="14">
    <location>
        <position position="1392"/>
    </location>
    <ligand>
        <name>Fe cation</name>
        <dbReference type="ChEBI" id="CHEBI:24875"/>
    </ligand>
</feature>
<feature type="binding site" evidence="2">
    <location>
        <position position="1470"/>
    </location>
    <ligand>
        <name>Fe cation</name>
        <dbReference type="ChEBI" id="CHEBI:24875"/>
    </ligand>
</feature>
<feature type="binding site" evidence="2">
    <location>
        <position position="1575"/>
    </location>
    <ligand>
        <name>Zn(2+)</name>
        <dbReference type="ChEBI" id="CHEBI:29105"/>
    </ligand>
</feature>
<feature type="binding site" evidence="2">
    <location>
        <position position="1578"/>
    </location>
    <ligand>
        <name>Zn(2+)</name>
        <dbReference type="ChEBI" id="CHEBI:29105"/>
    </ligand>
</feature>
<feature type="binding site" evidence="2">
    <location>
        <position position="1602"/>
    </location>
    <ligand>
        <name>Zn(2+)</name>
        <dbReference type="ChEBI" id="CHEBI:29105"/>
    </ligand>
</feature>
<feature type="binding site" evidence="2">
    <location>
        <position position="1605"/>
    </location>
    <ligand>
        <name>Zn(2+)</name>
        <dbReference type="ChEBI" id="CHEBI:29105"/>
    </ligand>
</feature>
<feature type="modified residue" description="Phosphoserine" evidence="16">
    <location>
        <position position="224"/>
    </location>
</feature>
<feature type="cross-link" description="Glycyl lysine isopeptide (Lys-Gly) (interchain with G-Cter in SUMO2)" evidence="17">
    <location>
        <position position="1109"/>
    </location>
</feature>
<feature type="splice variant" id="VSP_040102" description="In isoform 1." evidence="13">
    <original>L</original>
    <variation>LVRARRARGQRRRALGQAAGTGFGSPAAPFPEPPPAFSPQ</variation>
    <location>
        <position position="1636"/>
    </location>
</feature>
<feature type="sequence variant" id="VAR_083120" description="In NEDSST." evidence="12">
    <location>
        <begin position="75"/>
        <end position="1643"/>
    </location>
</feature>
<feature type="sequence variant" id="VAR_083121" description="In NEDSST." evidence="12">
    <location>
        <begin position="149"/>
        <end position="1643"/>
    </location>
</feature>
<feature type="sequence variant" id="VAR_061670" description="In dbSNP:rs60738318.">
    <original>P</original>
    <variation>A</variation>
    <location>
        <position position="203"/>
    </location>
</feature>
<feature type="sequence variant" id="VAR_032927" description="In dbSNP:rs2270516.">
    <original>S</original>
    <variation>L</variation>
    <location>
        <position position="308"/>
    </location>
</feature>
<feature type="sequence variant" id="VAR_083122" description="In NEDSST." evidence="12">
    <location>
        <begin position="1244"/>
        <end position="1643"/>
    </location>
</feature>
<feature type="sequence variant" id="VAR_083123" description="In NEDSST; dbSNP:rs1567802147." evidence="12">
    <original>N</original>
    <variation>S</variation>
    <location>
        <position position="1331"/>
    </location>
</feature>
<feature type="sequence variant" id="VAR_083124" description="In NEDSST; dbSNP:rs1567802439." evidence="12">
    <original>Y</original>
    <variation>S</variation>
    <location>
        <position position="1379"/>
    </location>
</feature>
<feature type="mutagenesis site" description="Abolishes lysine-specific histone demethylase activity." evidence="11">
    <original>HQE</original>
    <variation>AQA</variation>
    <location>
        <begin position="1390"/>
        <end position="1392"/>
    </location>
</feature>
<feature type="sequence conflict" description="In Ref. 1; BAA21572 and 3; AAH09994." evidence="14" ref="1 3">
    <location>
        <begin position="252"/>
        <end position="254"/>
    </location>
</feature>
<feature type="helix" evidence="22">
    <location>
        <begin position="1162"/>
        <end position="1164"/>
    </location>
</feature>
<feature type="strand" evidence="21">
    <location>
        <begin position="1172"/>
        <end position="1174"/>
    </location>
</feature>
<feature type="helix" evidence="22">
    <location>
        <begin position="1178"/>
        <end position="1181"/>
    </location>
</feature>
<feature type="strand" evidence="18">
    <location>
        <begin position="1187"/>
        <end position="1189"/>
    </location>
</feature>
<feature type="helix" evidence="18">
    <location>
        <begin position="1193"/>
        <end position="1195"/>
    </location>
</feature>
<feature type="helix" evidence="18">
    <location>
        <begin position="1199"/>
        <end position="1206"/>
    </location>
</feature>
<feature type="strand" evidence="18">
    <location>
        <begin position="1211"/>
        <end position="1217"/>
    </location>
</feature>
<feature type="helix" evidence="18">
    <location>
        <begin position="1218"/>
        <end position="1222"/>
    </location>
</feature>
<feature type="helix" evidence="18">
    <location>
        <begin position="1226"/>
        <end position="1229"/>
    </location>
</feature>
<feature type="helix" evidence="18">
    <location>
        <begin position="1231"/>
        <end position="1238"/>
    </location>
</feature>
<feature type="strand" evidence="18">
    <location>
        <begin position="1242"/>
        <end position="1249"/>
    </location>
</feature>
<feature type="strand" evidence="18">
    <location>
        <begin position="1261"/>
        <end position="1264"/>
    </location>
</feature>
<feature type="strand" evidence="18">
    <location>
        <begin position="1271"/>
        <end position="1276"/>
    </location>
</feature>
<feature type="helix" evidence="18">
    <location>
        <begin position="1277"/>
        <end position="1289"/>
    </location>
</feature>
<feature type="strand" evidence="18">
    <location>
        <begin position="1325"/>
        <end position="1333"/>
    </location>
</feature>
<feature type="helix" evidence="18">
    <location>
        <begin position="1337"/>
        <end position="1347"/>
    </location>
</feature>
<feature type="helix" evidence="18">
    <location>
        <begin position="1352"/>
        <end position="1354"/>
    </location>
</feature>
<feature type="turn" evidence="18">
    <location>
        <begin position="1356"/>
        <end position="1359"/>
    </location>
</feature>
<feature type="strand" evidence="18">
    <location>
        <begin position="1363"/>
        <end position="1365"/>
    </location>
</feature>
<feature type="strand" evidence="19">
    <location>
        <begin position="1366"/>
        <end position="1368"/>
    </location>
</feature>
<feature type="turn" evidence="19">
    <location>
        <begin position="1371"/>
        <end position="1373"/>
    </location>
</feature>
<feature type="strand" evidence="18">
    <location>
        <begin position="1375"/>
        <end position="1381"/>
    </location>
</feature>
<feature type="strand" evidence="18">
    <location>
        <begin position="1386"/>
        <end position="1390"/>
    </location>
</feature>
<feature type="helix" evidence="18">
    <location>
        <begin position="1393"/>
        <end position="1395"/>
    </location>
</feature>
<feature type="strand" evidence="18">
    <location>
        <begin position="1397"/>
        <end position="1406"/>
    </location>
</feature>
<feature type="strand" evidence="18">
    <location>
        <begin position="1408"/>
        <end position="1413"/>
    </location>
</feature>
<feature type="helix" evidence="18">
    <location>
        <begin position="1415"/>
        <end position="1417"/>
    </location>
</feature>
<feature type="helix" evidence="18">
    <location>
        <begin position="1418"/>
        <end position="1427"/>
    </location>
</feature>
<feature type="turn" evidence="18">
    <location>
        <begin position="1432"/>
        <end position="1434"/>
    </location>
</feature>
<feature type="helix" evidence="18">
    <location>
        <begin position="1441"/>
        <end position="1446"/>
    </location>
</feature>
<feature type="strand" evidence="18">
    <location>
        <begin position="1452"/>
        <end position="1456"/>
    </location>
</feature>
<feature type="strand" evidence="18">
    <location>
        <begin position="1461"/>
        <end position="1464"/>
    </location>
</feature>
<feature type="strand" evidence="18">
    <location>
        <begin position="1469"/>
        <end position="1487"/>
    </location>
</feature>
<feature type="helix" evidence="18">
    <location>
        <begin position="1491"/>
        <end position="1495"/>
    </location>
</feature>
<feature type="helix" evidence="18">
    <location>
        <begin position="1497"/>
        <end position="1501"/>
    </location>
</feature>
<feature type="helix" evidence="22">
    <location>
        <begin position="1514"/>
        <end position="1524"/>
    </location>
</feature>
<feature type="helix" evidence="22">
    <location>
        <begin position="1530"/>
        <end position="1556"/>
    </location>
</feature>
<feature type="strand" evidence="19">
    <location>
        <begin position="1561"/>
        <end position="1563"/>
    </location>
</feature>
<feature type="turn" evidence="22">
    <location>
        <begin position="1576"/>
        <end position="1578"/>
    </location>
</feature>
<feature type="strand" evidence="22">
    <location>
        <begin position="1584"/>
        <end position="1589"/>
    </location>
</feature>
<feature type="strand" evidence="20">
    <location>
        <begin position="1592"/>
        <end position="1596"/>
    </location>
</feature>
<feature type="strand" evidence="22">
    <location>
        <begin position="1597"/>
        <end position="1601"/>
    </location>
</feature>
<feature type="helix" evidence="22">
    <location>
        <begin position="1603"/>
        <end position="1609"/>
    </location>
</feature>
<feature type="turn" evidence="19">
    <location>
        <begin position="1610"/>
        <end position="1615"/>
    </location>
</feature>
<feature type="strand" evidence="22">
    <location>
        <begin position="1617"/>
        <end position="1622"/>
    </location>
</feature>
<feature type="helix" evidence="22">
    <location>
        <begin position="1624"/>
        <end position="1633"/>
    </location>
</feature>
<evidence type="ECO:0000250" key="1"/>
<evidence type="ECO:0000250" key="2">
    <source>
        <dbReference type="UniProtKB" id="O14607"/>
    </source>
</evidence>
<evidence type="ECO:0000250" key="3">
    <source>
        <dbReference type="UniProtKB" id="Q5NCY0"/>
    </source>
</evidence>
<evidence type="ECO:0000255" key="4">
    <source>
        <dbReference type="PROSITE-ProRule" id="PRU00538"/>
    </source>
</evidence>
<evidence type="ECO:0000256" key="5">
    <source>
        <dbReference type="SAM" id="MobiDB-lite"/>
    </source>
</evidence>
<evidence type="ECO:0000269" key="6">
    <source>
    </source>
</evidence>
<evidence type="ECO:0000269" key="7">
    <source>
    </source>
</evidence>
<evidence type="ECO:0000269" key="8">
    <source>
    </source>
</evidence>
<evidence type="ECO:0000269" key="9">
    <source>
    </source>
</evidence>
<evidence type="ECO:0000269" key="10">
    <source>
    </source>
</evidence>
<evidence type="ECO:0000269" key="11">
    <source>
    </source>
</evidence>
<evidence type="ECO:0000269" key="12">
    <source>
    </source>
</evidence>
<evidence type="ECO:0000303" key="13">
    <source>
    </source>
</evidence>
<evidence type="ECO:0000305" key="14"/>
<evidence type="ECO:0000305" key="15">
    <source>
    </source>
</evidence>
<evidence type="ECO:0007744" key="16">
    <source>
    </source>
</evidence>
<evidence type="ECO:0007744" key="17">
    <source>
    </source>
</evidence>
<evidence type="ECO:0007829" key="18">
    <source>
        <dbReference type="PDB" id="2XXZ"/>
    </source>
</evidence>
<evidence type="ECO:0007829" key="19">
    <source>
        <dbReference type="PDB" id="4ASK"/>
    </source>
</evidence>
<evidence type="ECO:0007829" key="20">
    <source>
        <dbReference type="PDB" id="5FP3"/>
    </source>
</evidence>
<evidence type="ECO:0007829" key="21">
    <source>
        <dbReference type="PDB" id="5OY3"/>
    </source>
</evidence>
<evidence type="ECO:0007829" key="22">
    <source>
        <dbReference type="PDB" id="6F6D"/>
    </source>
</evidence>